<gene>
    <name type="primary">uxaB</name>
    <name type="ordered locus">b1521</name>
    <name type="ordered locus">JW1514</name>
</gene>
<keyword id="KW-0903">Direct protein sequencing</keyword>
<keyword id="KW-0520">NAD</keyword>
<keyword id="KW-0560">Oxidoreductase</keyword>
<keyword id="KW-1185">Reference proteome</keyword>
<organism>
    <name type="scientific">Escherichia coli (strain K12)</name>
    <dbReference type="NCBI Taxonomy" id="83333"/>
    <lineage>
        <taxon>Bacteria</taxon>
        <taxon>Pseudomonadati</taxon>
        <taxon>Pseudomonadota</taxon>
        <taxon>Gammaproteobacteria</taxon>
        <taxon>Enterobacterales</taxon>
        <taxon>Enterobacteriaceae</taxon>
        <taxon>Escherichia</taxon>
    </lineage>
</organism>
<sequence length="483" mass="54808">MKTLNRRDFPGAQYPERIIQFGEGNFLRAFVDWQIDLLNEHTDLNSGVVVVRPIETSFPPSLSTQDGLYTTIIRGLNEKGEAVSDARLIRSVNREISVYSEYDEFLKLAHNPEMRFVFSNTTEAGISYHAGDKFDDAPAVSYPAKLTRLLFERFSHFNGALDKGWIIIPCELIDYNGDALRELVLRYAQEWALPEAFIQWLDQANSFCSTLVDRIVTGYPRDEVAKLEEELGYHDGFLDTAEHFYLFVIQGPKSLATELRLDKYPLNVLIVDDIKPYKERKVAILNGAHTALVPVAFQAGLDTVGEAMNDAEICAFVEKAIYEEIIPVLDLPRDELESFASAVTGRFRNPYIKHQLLSIALNGMTKFRTRILPQLLAGQKANGTLPARLTFALAALIAFYRGERNGETYPVQDDAHWLERYQQLWSQHRDRVIGTQELVAIVLAEKDHWEQDLTQVPGLVEQVANDLDAILEKGMREAVRPLC</sequence>
<name>UXAB_ECOLI</name>
<evidence type="ECO:0000250" key="1"/>
<evidence type="ECO:0000305" key="2"/>
<feature type="chain" id="PRO_0000170742" description="Altronate oxidoreductase">
    <location>
        <begin position="1"/>
        <end position="483"/>
    </location>
</feature>
<feature type="binding site" evidence="1">
    <location>
        <begin position="18"/>
        <end position="29"/>
    </location>
    <ligand>
        <name>NAD(+)</name>
        <dbReference type="ChEBI" id="CHEBI:57540"/>
    </ligand>
</feature>
<reference key="1">
    <citation type="submission" date="1992-09" db="EMBL/GenBank/DDBJ databases">
        <authorList>
            <person name="Mizobuchi K."/>
        </authorList>
    </citation>
    <scope>NUCLEOTIDE SEQUENCE [GENOMIC DNA]</scope>
    <source>
        <strain>K12 / W3110 / ATCC 27325 / DSM 5911</strain>
    </source>
</reference>
<reference key="2">
    <citation type="journal article" date="1996" name="DNA Res.">
        <title>A 570-kb DNA sequence of the Escherichia coli K-12 genome corresponding to the 28.0-40.1 min region on the linkage map.</title>
        <authorList>
            <person name="Aiba H."/>
            <person name="Baba T."/>
            <person name="Fujita K."/>
            <person name="Hayashi K."/>
            <person name="Inada T."/>
            <person name="Isono K."/>
            <person name="Itoh T."/>
            <person name="Kasai H."/>
            <person name="Kashimoto K."/>
            <person name="Kimura S."/>
            <person name="Kitakawa M."/>
            <person name="Kitagawa M."/>
            <person name="Makino K."/>
            <person name="Miki T."/>
            <person name="Mizobuchi K."/>
            <person name="Mori H."/>
            <person name="Mori T."/>
            <person name="Motomura K."/>
            <person name="Nakade S."/>
            <person name="Nakamura Y."/>
            <person name="Nashimoto H."/>
            <person name="Nishio Y."/>
            <person name="Oshima T."/>
            <person name="Saito N."/>
            <person name="Sampei G."/>
            <person name="Seki Y."/>
            <person name="Sivasundaram S."/>
            <person name="Tagami H."/>
            <person name="Takeda J."/>
            <person name="Takemoto K."/>
            <person name="Takeuchi Y."/>
            <person name="Wada C."/>
            <person name="Yamamoto Y."/>
            <person name="Horiuchi T."/>
        </authorList>
    </citation>
    <scope>NUCLEOTIDE SEQUENCE [LARGE SCALE GENOMIC DNA]</scope>
    <source>
        <strain>K12 / W3110 / ATCC 27325 / DSM 5911</strain>
    </source>
</reference>
<reference key="3">
    <citation type="journal article" date="1997" name="Science">
        <title>The complete genome sequence of Escherichia coli K-12.</title>
        <authorList>
            <person name="Blattner F.R."/>
            <person name="Plunkett G. III"/>
            <person name="Bloch C.A."/>
            <person name="Perna N.T."/>
            <person name="Burland V."/>
            <person name="Riley M."/>
            <person name="Collado-Vides J."/>
            <person name="Glasner J.D."/>
            <person name="Rode C.K."/>
            <person name="Mayhew G.F."/>
            <person name="Gregor J."/>
            <person name="Davis N.W."/>
            <person name="Kirkpatrick H.A."/>
            <person name="Goeden M.A."/>
            <person name="Rose D.J."/>
            <person name="Mau B."/>
            <person name="Shao Y."/>
        </authorList>
    </citation>
    <scope>NUCLEOTIDE SEQUENCE [LARGE SCALE GENOMIC DNA]</scope>
    <source>
        <strain>K12 / MG1655 / ATCC 47076</strain>
    </source>
</reference>
<reference key="4">
    <citation type="journal article" date="2006" name="Nucleic Acids Res.">
        <title>Escherichia coli K-12: a cooperatively developed annotation snapshot -- 2005.</title>
        <authorList>
            <person name="Riley M."/>
            <person name="Abe T."/>
            <person name="Arnaud M.B."/>
            <person name="Berlyn M.K.B."/>
            <person name="Blattner F.R."/>
            <person name="Chaudhuri R.R."/>
            <person name="Glasner J.D."/>
            <person name="Horiuchi T."/>
            <person name="Keseler I.M."/>
            <person name="Kosuge T."/>
            <person name="Mori H."/>
            <person name="Perna N.T."/>
            <person name="Plunkett G. III"/>
            <person name="Rudd K.E."/>
            <person name="Serres M.H."/>
            <person name="Thomas G.H."/>
            <person name="Thomson N.R."/>
            <person name="Wishart D."/>
            <person name="Wanner B.L."/>
        </authorList>
    </citation>
    <scope>SEQUENCE REVISION TO 332</scope>
</reference>
<reference key="5">
    <citation type="journal article" date="2006" name="Mol. Syst. Biol.">
        <title>Highly accurate genome sequences of Escherichia coli K-12 strains MG1655 and W3110.</title>
        <authorList>
            <person name="Hayashi K."/>
            <person name="Morooka N."/>
            <person name="Yamamoto Y."/>
            <person name="Fujita K."/>
            <person name="Isono K."/>
            <person name="Choi S."/>
            <person name="Ohtsubo E."/>
            <person name="Baba T."/>
            <person name="Wanner B.L."/>
            <person name="Mori H."/>
            <person name="Horiuchi T."/>
        </authorList>
    </citation>
    <scope>NUCLEOTIDE SEQUENCE [LARGE SCALE GENOMIC DNA]</scope>
    <source>
        <strain>K12 / W3110 / ATCC 27325 / DSM 5911</strain>
    </source>
</reference>
<reference key="6">
    <citation type="journal article" date="1986" name="J. Gen. Microbiol.">
        <title>A DNA sequence containing the control sites for the uxaB gene of Escherichia coli.</title>
        <authorList>
            <person name="Blanco C."/>
            <person name="Mata-Gilsinger M."/>
        </authorList>
    </citation>
    <scope>NUCLEOTIDE SEQUENCE [GENOMIC DNA] OF 1-45</scope>
    <scope>PROTEIN SEQUENCE OF 1-4</scope>
    <source>
        <strain>K12</strain>
    </source>
</reference>
<proteinExistence type="evidence at protein level"/>
<dbReference type="EC" id="1.1.1.58"/>
<dbReference type="EMBL" id="D13327">
    <property type="protein sequence ID" value="BAA02586.1"/>
    <property type="molecule type" value="Genomic_DNA"/>
</dbReference>
<dbReference type="EMBL" id="U00096">
    <property type="protein sequence ID" value="AAT48131.1"/>
    <property type="molecule type" value="Genomic_DNA"/>
</dbReference>
<dbReference type="EMBL" id="AP009048">
    <property type="protein sequence ID" value="BAA15204.1"/>
    <property type="molecule type" value="Genomic_DNA"/>
</dbReference>
<dbReference type="EMBL" id="M15737">
    <property type="protein sequence ID" value="AAA24757.1"/>
    <property type="molecule type" value="Genomic_DNA"/>
</dbReference>
<dbReference type="PIR" id="D64906">
    <property type="entry name" value="D64906"/>
</dbReference>
<dbReference type="RefSeq" id="WP_000854633.1">
    <property type="nucleotide sequence ID" value="NZ_SSZK01000001.1"/>
</dbReference>
<dbReference type="RefSeq" id="YP_025302.1">
    <property type="nucleotide sequence ID" value="NC_000913.3"/>
</dbReference>
<dbReference type="SMR" id="P0A6L7"/>
<dbReference type="BioGRID" id="4260230">
    <property type="interactions" value="14"/>
</dbReference>
<dbReference type="FunCoup" id="P0A6L7">
    <property type="interactions" value="86"/>
</dbReference>
<dbReference type="IntAct" id="P0A6L7">
    <property type="interactions" value="7"/>
</dbReference>
<dbReference type="STRING" id="511145.b1521"/>
<dbReference type="jPOST" id="P0A6L7"/>
<dbReference type="PaxDb" id="511145-b1521"/>
<dbReference type="EnsemblBacteria" id="AAT48131">
    <property type="protein sequence ID" value="AAT48131"/>
    <property type="gene ID" value="b1521"/>
</dbReference>
<dbReference type="GeneID" id="945542"/>
<dbReference type="KEGG" id="ecj:JW1514"/>
<dbReference type="KEGG" id="eco:b1521"/>
<dbReference type="PATRIC" id="fig|1411691.4.peg.746"/>
<dbReference type="EchoBASE" id="EB1058"/>
<dbReference type="eggNOG" id="COG0246">
    <property type="taxonomic scope" value="Bacteria"/>
</dbReference>
<dbReference type="HOGENOM" id="CLU_027324_1_0_6"/>
<dbReference type="InParanoid" id="P0A6L7"/>
<dbReference type="OMA" id="HNTFCST"/>
<dbReference type="OrthoDB" id="9768714at2"/>
<dbReference type="PhylomeDB" id="P0A6L7"/>
<dbReference type="BioCyc" id="EcoCyc:ALTRO-OXIDOREDUCT-MONOMER"/>
<dbReference type="BioCyc" id="MetaCyc:ALTRO-OXIDOREDUCT-MONOMER"/>
<dbReference type="UniPathway" id="UPA00246"/>
<dbReference type="PRO" id="PR:P0A6L7"/>
<dbReference type="Proteomes" id="UP000000625">
    <property type="component" value="Chromosome"/>
</dbReference>
<dbReference type="GO" id="GO:0005829">
    <property type="term" value="C:cytosol"/>
    <property type="evidence" value="ECO:0000318"/>
    <property type="project" value="GO_Central"/>
</dbReference>
<dbReference type="GO" id="GO:0008926">
    <property type="term" value="F:mannitol-1-phosphate 5-dehydrogenase activity"/>
    <property type="evidence" value="ECO:0000318"/>
    <property type="project" value="GO_Central"/>
</dbReference>
<dbReference type="GO" id="GO:0009026">
    <property type="term" value="F:tagaturonate reductase activity"/>
    <property type="evidence" value="ECO:0000314"/>
    <property type="project" value="EcoCyc"/>
</dbReference>
<dbReference type="GO" id="GO:0019698">
    <property type="term" value="P:D-galacturonate catabolic process"/>
    <property type="evidence" value="ECO:0000315"/>
    <property type="project" value="EcoCyc"/>
</dbReference>
<dbReference type="GO" id="GO:0019592">
    <property type="term" value="P:mannitol catabolic process"/>
    <property type="evidence" value="ECO:0000318"/>
    <property type="project" value="GO_Central"/>
</dbReference>
<dbReference type="FunFam" id="1.10.1040.10:FF:000018">
    <property type="entry name" value="Altronate oxidoreductase"/>
    <property type="match status" value="1"/>
</dbReference>
<dbReference type="FunFam" id="3.40.50.720:FF:000153">
    <property type="entry name" value="Altronate oxidoreductase"/>
    <property type="match status" value="1"/>
</dbReference>
<dbReference type="Gene3D" id="1.10.1040.10">
    <property type="entry name" value="N-(1-d-carboxylethyl)-l-norvaline Dehydrogenase, domain 2"/>
    <property type="match status" value="1"/>
</dbReference>
<dbReference type="Gene3D" id="3.40.50.720">
    <property type="entry name" value="NAD(P)-binding Rossmann-like Domain"/>
    <property type="match status" value="1"/>
</dbReference>
<dbReference type="HAMAP" id="MF_00670">
    <property type="entry name" value="Altron_oxidoreduct"/>
    <property type="match status" value="1"/>
</dbReference>
<dbReference type="InterPro" id="IPR008927">
    <property type="entry name" value="6-PGluconate_DH-like_C_sf"/>
</dbReference>
<dbReference type="InterPro" id="IPR013328">
    <property type="entry name" value="6PGD_dom2"/>
</dbReference>
<dbReference type="InterPro" id="IPR023668">
    <property type="entry name" value="Altronate_OxRdtase"/>
</dbReference>
<dbReference type="InterPro" id="IPR013118">
    <property type="entry name" value="Mannitol_DH_C"/>
</dbReference>
<dbReference type="InterPro" id="IPR013131">
    <property type="entry name" value="Mannitol_DH_N"/>
</dbReference>
<dbReference type="InterPro" id="IPR036291">
    <property type="entry name" value="NAD(P)-bd_dom_sf"/>
</dbReference>
<dbReference type="NCBIfam" id="NF002969">
    <property type="entry name" value="PRK03643.1"/>
    <property type="match status" value="1"/>
</dbReference>
<dbReference type="PANTHER" id="PTHR30524:SF0">
    <property type="entry name" value="ALTRONATE OXIDOREDUCTASE-RELATED"/>
    <property type="match status" value="1"/>
</dbReference>
<dbReference type="PANTHER" id="PTHR30524">
    <property type="entry name" value="MANNITOL-1-PHOSPHATE 5-DEHYDROGENASE"/>
    <property type="match status" value="1"/>
</dbReference>
<dbReference type="Pfam" id="PF01232">
    <property type="entry name" value="Mannitol_dh"/>
    <property type="match status" value="1"/>
</dbReference>
<dbReference type="Pfam" id="PF08125">
    <property type="entry name" value="Mannitol_dh_C"/>
    <property type="match status" value="1"/>
</dbReference>
<dbReference type="SUPFAM" id="SSF48179">
    <property type="entry name" value="6-phosphogluconate dehydrogenase C-terminal domain-like"/>
    <property type="match status" value="1"/>
</dbReference>
<dbReference type="SUPFAM" id="SSF51735">
    <property type="entry name" value="NAD(P)-binding Rossmann-fold domains"/>
    <property type="match status" value="1"/>
</dbReference>
<protein>
    <recommendedName>
        <fullName>Altronate oxidoreductase</fullName>
        <ecNumber>1.1.1.58</ecNumber>
    </recommendedName>
    <alternativeName>
        <fullName>Tagaturonate dehydrogenase</fullName>
    </alternativeName>
    <alternativeName>
        <fullName>Tagaturonate reductase</fullName>
    </alternativeName>
</protein>
<comment type="catalytic activity">
    <reaction>
        <text>D-altronate + NAD(+) = keto-D-tagaturonate + NADH + H(+)</text>
        <dbReference type="Rhea" id="RHEA:17813"/>
        <dbReference type="ChEBI" id="CHEBI:15378"/>
        <dbReference type="ChEBI" id="CHEBI:17360"/>
        <dbReference type="ChEBI" id="CHEBI:17886"/>
        <dbReference type="ChEBI" id="CHEBI:57540"/>
        <dbReference type="ChEBI" id="CHEBI:57945"/>
        <dbReference type="EC" id="1.1.1.58"/>
    </reaction>
</comment>
<comment type="pathway">
    <text>Carbohydrate metabolism; pentose and glucuronate interconversion.</text>
</comment>
<comment type="induction">
    <text>By galacturonate, tagaturonate and fructuronate. Its expression is subjected to catabolite repression by glucose.</text>
</comment>
<comment type="similarity">
    <text evidence="2">Belongs to the mannitol dehydrogenase family. UxaB subfamily.</text>
</comment>
<accession>P0A6L7</accession>
<accession>P24214</accession>
<accession>P78064</accession>